<comment type="function">
    <text evidence="1">Specifically catalyzes the NAD or NADP-dependent dehydrogenation of L-aspartate to iminoaspartate.</text>
</comment>
<comment type="catalytic activity">
    <reaction evidence="1">
        <text>L-aspartate + NADP(+) + H2O = oxaloacetate + NH4(+) + NADPH + H(+)</text>
        <dbReference type="Rhea" id="RHEA:11784"/>
        <dbReference type="ChEBI" id="CHEBI:15377"/>
        <dbReference type="ChEBI" id="CHEBI:15378"/>
        <dbReference type="ChEBI" id="CHEBI:16452"/>
        <dbReference type="ChEBI" id="CHEBI:28938"/>
        <dbReference type="ChEBI" id="CHEBI:29991"/>
        <dbReference type="ChEBI" id="CHEBI:57783"/>
        <dbReference type="ChEBI" id="CHEBI:58349"/>
        <dbReference type="EC" id="1.4.1.21"/>
    </reaction>
</comment>
<comment type="catalytic activity">
    <reaction evidence="1">
        <text>L-aspartate + NAD(+) + H2O = oxaloacetate + NH4(+) + NADH + H(+)</text>
        <dbReference type="Rhea" id="RHEA:11788"/>
        <dbReference type="ChEBI" id="CHEBI:15377"/>
        <dbReference type="ChEBI" id="CHEBI:15378"/>
        <dbReference type="ChEBI" id="CHEBI:16452"/>
        <dbReference type="ChEBI" id="CHEBI:28938"/>
        <dbReference type="ChEBI" id="CHEBI:29991"/>
        <dbReference type="ChEBI" id="CHEBI:57540"/>
        <dbReference type="ChEBI" id="CHEBI:57945"/>
        <dbReference type="EC" id="1.4.1.21"/>
    </reaction>
</comment>
<comment type="pathway">
    <text evidence="1">Cofactor biosynthesis; NAD(+) biosynthesis; iminoaspartate from L-aspartate (dehydrogenase route): step 1/1.</text>
</comment>
<comment type="miscellaneous">
    <text evidence="1">The iminoaspartate product is unstable in aqueous solution and can decompose to oxaloacetate and ammonia.</text>
</comment>
<comment type="similarity">
    <text evidence="1">Belongs to the L-aspartate dehydrogenase family.</text>
</comment>
<reference key="1">
    <citation type="journal article" date="2006" name="Science">
        <title>Genome of rice cluster I archaea -- the key methane producers in the rice rhizosphere.</title>
        <authorList>
            <person name="Erkel C."/>
            <person name="Kube M."/>
            <person name="Reinhardt R."/>
            <person name="Liesack W."/>
        </authorList>
    </citation>
    <scope>NUCLEOTIDE SEQUENCE [LARGE SCALE GENOMIC DNA]</scope>
    <source>
        <strain>DSM 22066 / NBRC 105507 / MRE50</strain>
    </source>
</reference>
<proteinExistence type="inferred from homology"/>
<sequence>MFRIGIVGAGAIGKEIARAIDNGTVPAKLEAIYDRDTAEATSFAASLKSKPRVLPLEELVEASNFVVEAAAQSAVREVAIAALSRSRSVMIMSVGALADKELLETIRTMAKEHCCSIYLPSGAIGGLDAVKAASICKIDSVTITTRKPRDGLRGAPFIVRNNIDVDSMDEPTEIFSGPAAVAIKEFPANVNVAASLSLVGIGFERTLVRVVVDPTIKRNIHEISVRGEFGELHTVVENVPARSNPKTSFLAALSAIATLRQVCEPLKIGT</sequence>
<dbReference type="EC" id="1.4.1.21" evidence="1"/>
<dbReference type="EMBL" id="AM114193">
    <property type="protein sequence ID" value="CAJ35703.1"/>
    <property type="molecule type" value="Genomic_DNA"/>
</dbReference>
<dbReference type="RefSeq" id="WP_012036796.1">
    <property type="nucleotide sequence ID" value="NC_009464.1"/>
</dbReference>
<dbReference type="SMR" id="Q0W7E0"/>
<dbReference type="STRING" id="351160.RCIX226"/>
<dbReference type="GeneID" id="5143303"/>
<dbReference type="KEGG" id="rci:RCIX226"/>
<dbReference type="PATRIC" id="fig|351160.9.peg.2533"/>
<dbReference type="eggNOG" id="arCOG00254">
    <property type="taxonomic scope" value="Archaea"/>
</dbReference>
<dbReference type="OrthoDB" id="15415at2157"/>
<dbReference type="UniPathway" id="UPA00253">
    <property type="reaction ID" value="UER00456"/>
</dbReference>
<dbReference type="Proteomes" id="UP000000663">
    <property type="component" value="Chromosome"/>
</dbReference>
<dbReference type="GO" id="GO:0033735">
    <property type="term" value="F:aspartate dehydrogenase activity"/>
    <property type="evidence" value="ECO:0007669"/>
    <property type="project" value="UniProtKB-EC"/>
</dbReference>
<dbReference type="GO" id="GO:0051287">
    <property type="term" value="F:NAD binding"/>
    <property type="evidence" value="ECO:0007669"/>
    <property type="project" value="UniProtKB-UniRule"/>
</dbReference>
<dbReference type="GO" id="GO:0050661">
    <property type="term" value="F:NADP binding"/>
    <property type="evidence" value="ECO:0007669"/>
    <property type="project" value="UniProtKB-UniRule"/>
</dbReference>
<dbReference type="GO" id="GO:0016639">
    <property type="term" value="F:oxidoreductase activity, acting on the CH-NH2 group of donors, NAD or NADP as acceptor"/>
    <property type="evidence" value="ECO:0007669"/>
    <property type="project" value="UniProtKB-UniRule"/>
</dbReference>
<dbReference type="GO" id="GO:0009435">
    <property type="term" value="P:NAD biosynthetic process"/>
    <property type="evidence" value="ECO:0007669"/>
    <property type="project" value="UniProtKB-UniRule"/>
</dbReference>
<dbReference type="Gene3D" id="3.30.360.10">
    <property type="entry name" value="Dihydrodipicolinate Reductase, domain 2"/>
    <property type="match status" value="1"/>
</dbReference>
<dbReference type="Gene3D" id="3.40.50.720">
    <property type="entry name" value="NAD(P)-binding Rossmann-like Domain"/>
    <property type="match status" value="1"/>
</dbReference>
<dbReference type="HAMAP" id="MF_01265">
    <property type="entry name" value="NadX"/>
    <property type="match status" value="1"/>
</dbReference>
<dbReference type="InterPro" id="IPR005106">
    <property type="entry name" value="Asp/hSer_DH_NAD-bd"/>
</dbReference>
<dbReference type="InterPro" id="IPR002811">
    <property type="entry name" value="Asp_DH"/>
</dbReference>
<dbReference type="InterPro" id="IPR022487">
    <property type="entry name" value="Asp_DH_arc"/>
</dbReference>
<dbReference type="InterPro" id="IPR020626">
    <property type="entry name" value="Asp_DH_prok"/>
</dbReference>
<dbReference type="InterPro" id="IPR011182">
    <property type="entry name" value="L-Asp_DH"/>
</dbReference>
<dbReference type="InterPro" id="IPR036291">
    <property type="entry name" value="NAD(P)-bd_dom_sf"/>
</dbReference>
<dbReference type="NCBIfam" id="TIGR03855">
    <property type="entry name" value="NAD_NadX"/>
    <property type="match status" value="1"/>
</dbReference>
<dbReference type="NCBIfam" id="NF009828">
    <property type="entry name" value="PRK13303.1-3"/>
    <property type="match status" value="1"/>
</dbReference>
<dbReference type="NCBIfam" id="NF009830">
    <property type="entry name" value="PRK13304.1"/>
    <property type="match status" value="1"/>
</dbReference>
<dbReference type="PANTHER" id="PTHR31873:SF6">
    <property type="entry name" value="ASPARTATE DEHYDROGENASE DOMAIN-CONTAINING PROTEIN"/>
    <property type="match status" value="1"/>
</dbReference>
<dbReference type="PANTHER" id="PTHR31873">
    <property type="entry name" value="L-ASPARTATE DEHYDROGENASE-RELATED"/>
    <property type="match status" value="1"/>
</dbReference>
<dbReference type="Pfam" id="PF01958">
    <property type="entry name" value="Asp_DH_C"/>
    <property type="match status" value="1"/>
</dbReference>
<dbReference type="Pfam" id="PF03447">
    <property type="entry name" value="NAD_binding_3"/>
    <property type="match status" value="1"/>
</dbReference>
<dbReference type="PIRSF" id="PIRSF005227">
    <property type="entry name" value="Asp_dh_NAD_syn"/>
    <property type="match status" value="1"/>
</dbReference>
<dbReference type="SUPFAM" id="SSF55347">
    <property type="entry name" value="Glyceraldehyde-3-phosphate dehydrogenase-like, C-terminal domain"/>
    <property type="match status" value="1"/>
</dbReference>
<dbReference type="SUPFAM" id="SSF51735">
    <property type="entry name" value="NAD(P)-binding Rossmann-fold domains"/>
    <property type="match status" value="1"/>
</dbReference>
<accession>Q0W7E0</accession>
<organism>
    <name type="scientific">Methanocella arvoryzae (strain DSM 22066 / NBRC 105507 / MRE50)</name>
    <dbReference type="NCBI Taxonomy" id="351160"/>
    <lineage>
        <taxon>Archaea</taxon>
        <taxon>Methanobacteriati</taxon>
        <taxon>Methanobacteriota</taxon>
        <taxon>Stenosarchaea group</taxon>
        <taxon>Methanomicrobia</taxon>
        <taxon>Methanocellales</taxon>
        <taxon>Methanocellaceae</taxon>
        <taxon>Methanocella</taxon>
    </lineage>
</organism>
<feature type="chain" id="PRO_1000067314" description="L-aspartate dehydrogenase">
    <location>
        <begin position="1"/>
        <end position="270"/>
    </location>
</feature>
<feature type="active site" evidence="1">
    <location>
        <position position="221"/>
    </location>
</feature>
<feature type="binding site" evidence="1">
    <location>
        <position position="123"/>
    </location>
    <ligand>
        <name>NAD(+)</name>
        <dbReference type="ChEBI" id="CHEBI:57540"/>
    </ligand>
</feature>
<feature type="binding site" evidence="1">
    <location>
        <position position="191"/>
    </location>
    <ligand>
        <name>NAD(+)</name>
        <dbReference type="ChEBI" id="CHEBI:57540"/>
    </ligand>
</feature>
<protein>
    <recommendedName>
        <fullName evidence="1">L-aspartate dehydrogenase</fullName>
        <ecNumber evidence="1">1.4.1.21</ecNumber>
    </recommendedName>
</protein>
<keyword id="KW-0520">NAD</keyword>
<keyword id="KW-0521">NADP</keyword>
<keyword id="KW-0560">Oxidoreductase</keyword>
<keyword id="KW-0662">Pyridine nucleotide biosynthesis</keyword>
<keyword id="KW-1185">Reference proteome</keyword>
<name>ASPD_METAR</name>
<gene>
    <name evidence="1" type="primary">nadX</name>
    <name type="ordered locus">UNCMA_24780</name>
    <name type="ORF">RCIX226</name>
</gene>
<evidence type="ECO:0000255" key="1">
    <source>
        <dbReference type="HAMAP-Rule" id="MF_01265"/>
    </source>
</evidence>